<organism>
    <name type="scientific">Escherichia coli O157:H7</name>
    <dbReference type="NCBI Taxonomy" id="83334"/>
    <lineage>
        <taxon>Bacteria</taxon>
        <taxon>Pseudomonadati</taxon>
        <taxon>Pseudomonadota</taxon>
        <taxon>Gammaproteobacteria</taxon>
        <taxon>Enterobacterales</taxon>
        <taxon>Enterobacteriaceae</taxon>
        <taxon>Escherichia</taxon>
    </lineage>
</organism>
<reference key="1">
    <citation type="journal article" date="2001" name="Nature">
        <title>Genome sequence of enterohaemorrhagic Escherichia coli O157:H7.</title>
        <authorList>
            <person name="Perna N.T."/>
            <person name="Plunkett G. III"/>
            <person name="Burland V."/>
            <person name="Mau B."/>
            <person name="Glasner J.D."/>
            <person name="Rose D.J."/>
            <person name="Mayhew G.F."/>
            <person name="Evans P.S."/>
            <person name="Gregor J."/>
            <person name="Kirkpatrick H.A."/>
            <person name="Posfai G."/>
            <person name="Hackett J."/>
            <person name="Klink S."/>
            <person name="Boutin A."/>
            <person name="Shao Y."/>
            <person name="Miller L."/>
            <person name="Grotbeck E.J."/>
            <person name="Davis N.W."/>
            <person name="Lim A."/>
            <person name="Dimalanta E.T."/>
            <person name="Potamousis K."/>
            <person name="Apodaca J."/>
            <person name="Anantharaman T.S."/>
            <person name="Lin J."/>
            <person name="Yen G."/>
            <person name="Schwartz D.C."/>
            <person name="Welch R.A."/>
            <person name="Blattner F.R."/>
        </authorList>
    </citation>
    <scope>NUCLEOTIDE SEQUENCE [LARGE SCALE GENOMIC DNA]</scope>
    <source>
        <strain>O157:H7 / EDL933 / ATCC 700927 / EHEC</strain>
    </source>
</reference>
<reference key="2">
    <citation type="journal article" date="2001" name="DNA Res.">
        <title>Complete genome sequence of enterohemorrhagic Escherichia coli O157:H7 and genomic comparison with a laboratory strain K-12.</title>
        <authorList>
            <person name="Hayashi T."/>
            <person name="Makino K."/>
            <person name="Ohnishi M."/>
            <person name="Kurokawa K."/>
            <person name="Ishii K."/>
            <person name="Yokoyama K."/>
            <person name="Han C.-G."/>
            <person name="Ohtsubo E."/>
            <person name="Nakayama K."/>
            <person name="Murata T."/>
            <person name="Tanaka M."/>
            <person name="Tobe T."/>
            <person name="Iida T."/>
            <person name="Takami H."/>
            <person name="Honda T."/>
            <person name="Sasakawa C."/>
            <person name="Ogasawara N."/>
            <person name="Yasunaga T."/>
            <person name="Kuhara S."/>
            <person name="Shiba T."/>
            <person name="Hattori M."/>
            <person name="Shinagawa H."/>
        </authorList>
    </citation>
    <scope>NUCLEOTIDE SEQUENCE [LARGE SCALE GENOMIC DNA]</scope>
    <source>
        <strain>O157:H7 / Sakai / RIMD 0509952 / EHEC</strain>
    </source>
</reference>
<evidence type="ECO:0000250" key="1"/>
<evidence type="ECO:0000305" key="2"/>
<dbReference type="EMBL" id="AE005174">
    <property type="protein sequence ID" value="AAG58418.1"/>
    <property type="molecule type" value="Genomic_DNA"/>
</dbReference>
<dbReference type="EMBL" id="BA000007">
    <property type="protein sequence ID" value="BAB37585.1"/>
    <property type="molecule type" value="Genomic_DNA"/>
</dbReference>
<dbReference type="PIR" id="B91149">
    <property type="entry name" value="B91149"/>
</dbReference>
<dbReference type="PIR" id="F85994">
    <property type="entry name" value="F85994"/>
</dbReference>
<dbReference type="RefSeq" id="NP_312189.1">
    <property type="nucleotide sequence ID" value="NC_002695.1"/>
</dbReference>
<dbReference type="RefSeq" id="WP_001029684.1">
    <property type="nucleotide sequence ID" value="NZ_VOAI01000041.1"/>
</dbReference>
<dbReference type="SMR" id="P0A7S1"/>
<dbReference type="STRING" id="155864.Z4667"/>
<dbReference type="GeneID" id="915982"/>
<dbReference type="GeneID" id="93778690"/>
<dbReference type="KEGG" id="ece:Z4667"/>
<dbReference type="KEGG" id="ecs:ECs_4162"/>
<dbReference type="PATRIC" id="fig|386585.9.peg.4345"/>
<dbReference type="eggNOG" id="COG0100">
    <property type="taxonomic scope" value="Bacteria"/>
</dbReference>
<dbReference type="HOGENOM" id="CLU_072439_5_0_6"/>
<dbReference type="OMA" id="KWGVAHI"/>
<dbReference type="Proteomes" id="UP000000558">
    <property type="component" value="Chromosome"/>
</dbReference>
<dbReference type="Proteomes" id="UP000002519">
    <property type="component" value="Chromosome"/>
</dbReference>
<dbReference type="GO" id="GO:1990904">
    <property type="term" value="C:ribonucleoprotein complex"/>
    <property type="evidence" value="ECO:0007669"/>
    <property type="project" value="UniProtKB-KW"/>
</dbReference>
<dbReference type="GO" id="GO:0005840">
    <property type="term" value="C:ribosome"/>
    <property type="evidence" value="ECO:0007669"/>
    <property type="project" value="UniProtKB-KW"/>
</dbReference>
<dbReference type="GO" id="GO:0019843">
    <property type="term" value="F:rRNA binding"/>
    <property type="evidence" value="ECO:0007669"/>
    <property type="project" value="UniProtKB-UniRule"/>
</dbReference>
<dbReference type="GO" id="GO:0003735">
    <property type="term" value="F:structural constituent of ribosome"/>
    <property type="evidence" value="ECO:0007669"/>
    <property type="project" value="InterPro"/>
</dbReference>
<dbReference type="GO" id="GO:0006412">
    <property type="term" value="P:translation"/>
    <property type="evidence" value="ECO:0007669"/>
    <property type="project" value="UniProtKB-UniRule"/>
</dbReference>
<dbReference type="FunFam" id="3.30.420.80:FF:000001">
    <property type="entry name" value="30S ribosomal protein S11"/>
    <property type="match status" value="1"/>
</dbReference>
<dbReference type="Gene3D" id="3.30.420.80">
    <property type="entry name" value="Ribosomal protein S11"/>
    <property type="match status" value="1"/>
</dbReference>
<dbReference type="HAMAP" id="MF_01310">
    <property type="entry name" value="Ribosomal_uS11"/>
    <property type="match status" value="1"/>
</dbReference>
<dbReference type="InterPro" id="IPR001971">
    <property type="entry name" value="Ribosomal_uS11"/>
</dbReference>
<dbReference type="InterPro" id="IPR019981">
    <property type="entry name" value="Ribosomal_uS11_bac-type"/>
</dbReference>
<dbReference type="InterPro" id="IPR018102">
    <property type="entry name" value="Ribosomal_uS11_CS"/>
</dbReference>
<dbReference type="InterPro" id="IPR036967">
    <property type="entry name" value="Ribosomal_uS11_sf"/>
</dbReference>
<dbReference type="NCBIfam" id="NF003698">
    <property type="entry name" value="PRK05309.1"/>
    <property type="match status" value="1"/>
</dbReference>
<dbReference type="NCBIfam" id="TIGR03632">
    <property type="entry name" value="uS11_bact"/>
    <property type="match status" value="1"/>
</dbReference>
<dbReference type="PANTHER" id="PTHR11759">
    <property type="entry name" value="40S RIBOSOMAL PROTEIN S14/30S RIBOSOMAL PROTEIN S11"/>
    <property type="match status" value="1"/>
</dbReference>
<dbReference type="Pfam" id="PF00411">
    <property type="entry name" value="Ribosomal_S11"/>
    <property type="match status" value="1"/>
</dbReference>
<dbReference type="PIRSF" id="PIRSF002131">
    <property type="entry name" value="Ribosomal_S11"/>
    <property type="match status" value="1"/>
</dbReference>
<dbReference type="SUPFAM" id="SSF53137">
    <property type="entry name" value="Translational machinery components"/>
    <property type="match status" value="1"/>
</dbReference>
<dbReference type="PROSITE" id="PS00054">
    <property type="entry name" value="RIBOSOMAL_S11"/>
    <property type="match status" value="1"/>
</dbReference>
<gene>
    <name type="primary">rpsK</name>
    <name type="ordered locus">Z4667</name>
    <name type="ordered locus">ECs4162</name>
</gene>
<proteinExistence type="inferred from homology"/>
<comment type="function">
    <text evidence="1">Located on the platform of the 30S subunit, it bridges several disparate RNA helices of the 16S rRNA. Forms part of the Shine-Dalgarno cleft in the 70S ribosome (By similarity).</text>
</comment>
<comment type="subunit">
    <text evidence="1">Part of the 30S ribosomal subunit. Interacts with proteins S7 and S18. Cross-links to IF-3 (By similarity).</text>
</comment>
<comment type="similarity">
    <text evidence="2">Belongs to the universal ribosomal protein uS11 family.</text>
</comment>
<protein>
    <recommendedName>
        <fullName evidence="2">Small ribosomal subunit protein uS11</fullName>
    </recommendedName>
    <alternativeName>
        <fullName>30S ribosomal protein S11</fullName>
    </alternativeName>
</protein>
<feature type="initiator methionine" description="Removed" evidence="1">
    <location>
        <position position="1"/>
    </location>
</feature>
<feature type="chain" id="PRO_0000123146" description="Small ribosomal subunit protein uS11">
    <location>
        <begin position="2"/>
        <end position="129"/>
    </location>
</feature>
<feature type="modified residue" description="N-methylalanine" evidence="1">
    <location>
        <position position="2"/>
    </location>
</feature>
<accession>P0A7S1</accession>
<accession>P02366</accession>
<keyword id="KW-0488">Methylation</keyword>
<keyword id="KW-1185">Reference proteome</keyword>
<keyword id="KW-0687">Ribonucleoprotein</keyword>
<keyword id="KW-0689">Ribosomal protein</keyword>
<keyword id="KW-0694">RNA-binding</keyword>
<keyword id="KW-0699">rRNA-binding</keyword>
<sequence length="129" mass="13845">MAKAPIRARKRVRKQVSDGVAHIHASFNNTIVTITDRQGNALGWATAGGSGFRGSRKSTPFAAQVAAERCADAVKEYGIKNLEVMVKGPGPGRESTIRALNAAGFRITNITDVTPIPHNGCRPPKKRRV</sequence>
<name>RS11_ECO57</name>